<name>HENMT_TETTS</name>
<protein>
    <recommendedName>
        <fullName>Small RNA 2'-O-methyltransferase</fullName>
        <ecNumber evidence="2">2.1.1.386</ecNumber>
    </recommendedName>
    <alternativeName>
        <fullName>HEN1 methyltransferase homolog 1</fullName>
    </alternativeName>
</protein>
<organism>
    <name type="scientific">Tetrahymena thermophila (strain SB210)</name>
    <dbReference type="NCBI Taxonomy" id="312017"/>
    <lineage>
        <taxon>Eukaryota</taxon>
        <taxon>Sar</taxon>
        <taxon>Alveolata</taxon>
        <taxon>Ciliophora</taxon>
        <taxon>Intramacronucleata</taxon>
        <taxon>Oligohymenophorea</taxon>
        <taxon>Hymenostomatida</taxon>
        <taxon>Tetrahymenina</taxon>
        <taxon>Tetrahymenidae</taxon>
        <taxon>Tetrahymena</taxon>
    </lineage>
</organism>
<feature type="chain" id="PRO_0000406962" description="Small RNA 2'-O-methyltransferase">
    <location>
        <begin position="1"/>
        <end position="423"/>
    </location>
</feature>
<feature type="binding site" evidence="1">
    <location>
        <position position="65"/>
    </location>
    <ligand>
        <name>S-adenosyl-L-methionine</name>
        <dbReference type="ChEBI" id="CHEBI:59789"/>
    </ligand>
</feature>
<feature type="binding site" evidence="1">
    <location>
        <position position="104"/>
    </location>
    <ligand>
        <name>S-adenosyl-L-methionine</name>
        <dbReference type="ChEBI" id="CHEBI:59789"/>
    </ligand>
</feature>
<feature type="binding site" evidence="1">
    <location>
        <position position="124"/>
    </location>
    <ligand>
        <name>Mg(2+)</name>
        <dbReference type="ChEBI" id="CHEBI:18420"/>
    </ligand>
</feature>
<feature type="binding site" evidence="1">
    <location>
        <position position="127"/>
    </location>
    <ligand>
        <name>Mg(2+)</name>
        <dbReference type="ChEBI" id="CHEBI:18420"/>
    </ligand>
</feature>
<feature type="binding site" evidence="1">
    <location>
        <position position="128"/>
    </location>
    <ligand>
        <name>Mg(2+)</name>
        <dbReference type="ChEBI" id="CHEBI:18420"/>
    </ligand>
</feature>
<feature type="binding site" evidence="1">
    <location>
        <position position="177"/>
    </location>
    <ligand>
        <name>Mg(2+)</name>
        <dbReference type="ChEBI" id="CHEBI:18420"/>
    </ligand>
</feature>
<sequence>MIEAYETDVFMDPIGMKVWEKRHQYVATKLSALNCKRVLDMGTNTCKLIQRLSRSLQFTQIDGLDIDGQLLETQGIQNAKPDLIQNQYASMRDHQLVVNLYQGSALNKIQHLKDQQYDAVILVELIEHLQVEDVFLIEQNLFGFLRPQFVIVTTPNSDFNVYFNFKEQGVLFRDKDHKFEWSQNQFQIWAQKVCQNYGYKVIELTGVGEHKTEGTKNGFCTQIVVFEKDTQQEKYLNFAFFNLQEGEIRQVCQILYPFESKEQHFQREVVDSIRYILHITDKQNQFEDGSYQNYTTLSRIMQNHSISSNWQIQGDYFKLKTYIQNISEFLVHENQFNFQESFVTLNYQAQMEDEENEDQLESDSENVKMQQQQYYFSNDNCFSTKDTTYSSFSTADNLFSQKIQLGQQQMALEEIELEDTIDY</sequence>
<dbReference type="EC" id="2.1.1.386" evidence="2"/>
<dbReference type="EMBL" id="FM199973">
    <property type="protein sequence ID" value="CAQ86608.1"/>
    <property type="molecule type" value="mRNA"/>
</dbReference>
<dbReference type="EMBL" id="GG662532">
    <property type="protein sequence ID" value="EAR91161.3"/>
    <property type="molecule type" value="Genomic_DNA"/>
</dbReference>
<dbReference type="RefSeq" id="XP_001011406.3">
    <property type="nucleotide sequence ID" value="XM_001011406.4"/>
</dbReference>
<dbReference type="SMR" id="Q230X8"/>
<dbReference type="STRING" id="312017.Q230X8"/>
<dbReference type="EnsemblProtists" id="EAR91161">
    <property type="protein sequence ID" value="EAR91161"/>
    <property type="gene ID" value="TTHERM_00433810"/>
</dbReference>
<dbReference type="GeneID" id="7840569"/>
<dbReference type="KEGG" id="tet:TTHERM_00433810"/>
<dbReference type="eggNOG" id="KOG1045">
    <property type="taxonomic scope" value="Eukaryota"/>
</dbReference>
<dbReference type="HOGENOM" id="CLU_649718_0_0_1"/>
<dbReference type="InParanoid" id="Q230X8"/>
<dbReference type="OrthoDB" id="313126at2759"/>
<dbReference type="Proteomes" id="UP000009168">
    <property type="component" value="Unassembled WGS sequence"/>
</dbReference>
<dbReference type="GO" id="GO:0005737">
    <property type="term" value="C:cytoplasm"/>
    <property type="evidence" value="ECO:0007669"/>
    <property type="project" value="TreeGrafter"/>
</dbReference>
<dbReference type="GO" id="GO:0031039">
    <property type="term" value="C:macronucleus"/>
    <property type="evidence" value="ECO:0000314"/>
    <property type="project" value="UniProtKB"/>
</dbReference>
<dbReference type="GO" id="GO:0046872">
    <property type="term" value="F:metal ion binding"/>
    <property type="evidence" value="ECO:0007669"/>
    <property type="project" value="UniProtKB-KW"/>
</dbReference>
<dbReference type="GO" id="GO:0008171">
    <property type="term" value="F:O-methyltransferase activity"/>
    <property type="evidence" value="ECO:0000314"/>
    <property type="project" value="UniProtKB"/>
</dbReference>
<dbReference type="GO" id="GO:0003723">
    <property type="term" value="F:RNA binding"/>
    <property type="evidence" value="ECO:0007669"/>
    <property type="project" value="UniProtKB-KW"/>
</dbReference>
<dbReference type="GO" id="GO:0008173">
    <property type="term" value="F:RNA methyltransferase activity"/>
    <property type="evidence" value="ECO:0000314"/>
    <property type="project" value="UniProtKB"/>
</dbReference>
<dbReference type="GO" id="GO:0090486">
    <property type="term" value="F:small RNA 2'-O-methyltransferase activity"/>
    <property type="evidence" value="ECO:0007669"/>
    <property type="project" value="RHEA"/>
</dbReference>
<dbReference type="GO" id="GO:0031049">
    <property type="term" value="P:programmed DNA elimination"/>
    <property type="evidence" value="ECO:0000315"/>
    <property type="project" value="UniProtKB"/>
</dbReference>
<dbReference type="GO" id="GO:0001510">
    <property type="term" value="P:RNA methylation"/>
    <property type="evidence" value="ECO:0000314"/>
    <property type="project" value="UniProtKB"/>
</dbReference>
<dbReference type="GO" id="GO:0030422">
    <property type="term" value="P:siRNA processing"/>
    <property type="evidence" value="ECO:0007669"/>
    <property type="project" value="TreeGrafter"/>
</dbReference>
<dbReference type="FunFam" id="3.40.50.150:FF:000743">
    <property type="entry name" value="Protein with similarity to HEN1 (Arabidopsis thaliana)"/>
    <property type="match status" value="1"/>
</dbReference>
<dbReference type="Gene3D" id="3.40.50.150">
    <property type="entry name" value="Vaccinia Virus protein VP39"/>
    <property type="match status" value="1"/>
</dbReference>
<dbReference type="InterPro" id="IPR026610">
    <property type="entry name" value="Hen1"/>
</dbReference>
<dbReference type="InterPro" id="IPR029063">
    <property type="entry name" value="SAM-dependent_MTases_sf"/>
</dbReference>
<dbReference type="PANTHER" id="PTHR21404">
    <property type="entry name" value="HEN1"/>
    <property type="match status" value="1"/>
</dbReference>
<dbReference type="PANTHER" id="PTHR21404:SF3">
    <property type="entry name" value="SMALL RNA 2'-O-METHYLTRANSFERASE"/>
    <property type="match status" value="1"/>
</dbReference>
<dbReference type="SUPFAM" id="SSF53335">
    <property type="entry name" value="S-adenosyl-L-methionine-dependent methyltransferases"/>
    <property type="match status" value="1"/>
</dbReference>
<accession>Q230X8</accession>
<accession>B6ETG8</accession>
<gene>
    <name type="primary">HEN1</name>
    <name type="ORF">TTHERM_00433810</name>
</gene>
<evidence type="ECO:0000250" key="1">
    <source>
        <dbReference type="UniProtKB" id="Q9C5Q8"/>
    </source>
</evidence>
<evidence type="ECO:0000269" key="2">
    <source>
    </source>
</evidence>
<evidence type="ECO:0000305" key="3"/>
<keyword id="KW-0460">Magnesium</keyword>
<keyword id="KW-0479">Metal-binding</keyword>
<keyword id="KW-0489">Methyltransferase</keyword>
<keyword id="KW-0539">Nucleus</keyword>
<keyword id="KW-1185">Reference proteome</keyword>
<keyword id="KW-0694">RNA-binding</keyword>
<keyword id="KW-0943">RNA-mediated gene silencing</keyword>
<keyword id="KW-0949">S-adenosyl-L-methionine</keyword>
<keyword id="KW-0808">Transferase</keyword>
<reference key="1">
    <citation type="journal article" date="2009" name="RNA">
        <title>2'-O-methylation stabilizes Piwi-associated small RNAs and ensures DNA elimination in Tetrahymena.</title>
        <authorList>
            <person name="Kurth H.M."/>
            <person name="Mochizuki K."/>
        </authorList>
    </citation>
    <scope>NUCLEOTIDE SEQUENCE [MRNA]</scope>
    <scope>FUNCTION</scope>
    <scope>CATALYTIC ACTIVITY</scope>
    <scope>SUBCELLULAR LOCATION</scope>
    <scope>INTERACTION WITH TWI1</scope>
    <scope>DISRUPTION PHENOTYPE</scope>
    <source>
        <strain>B2086 x CU428</strain>
    </source>
</reference>
<reference key="2">
    <citation type="journal article" date="2006" name="PLoS Biol.">
        <title>Macronuclear genome sequence of the ciliate Tetrahymena thermophila, a model eukaryote.</title>
        <authorList>
            <person name="Eisen J.A."/>
            <person name="Coyne R.S."/>
            <person name="Wu M."/>
            <person name="Wu D."/>
            <person name="Thiagarajan M."/>
            <person name="Wortman J.R."/>
            <person name="Badger J.H."/>
            <person name="Ren Q."/>
            <person name="Amedeo P."/>
            <person name="Jones K.M."/>
            <person name="Tallon L.J."/>
            <person name="Delcher A.L."/>
            <person name="Salzberg S.L."/>
            <person name="Silva J.C."/>
            <person name="Haas B.J."/>
            <person name="Majoros W.H."/>
            <person name="Farzad M."/>
            <person name="Carlton J.M."/>
            <person name="Smith R.K. Jr."/>
            <person name="Garg J."/>
            <person name="Pearlman R.E."/>
            <person name="Karrer K.M."/>
            <person name="Sun L."/>
            <person name="Manning G."/>
            <person name="Elde N.C."/>
            <person name="Turkewitz A.P."/>
            <person name="Asai D.J."/>
            <person name="Wilkes D.E."/>
            <person name="Wang Y."/>
            <person name="Cai H."/>
            <person name="Collins K."/>
            <person name="Stewart B.A."/>
            <person name="Lee S.R."/>
            <person name="Wilamowska K."/>
            <person name="Weinberg Z."/>
            <person name="Ruzzo W.L."/>
            <person name="Wloga D."/>
            <person name="Gaertig J."/>
            <person name="Frankel J."/>
            <person name="Tsao C.-C."/>
            <person name="Gorovsky M.A."/>
            <person name="Keeling P.J."/>
            <person name="Waller R.F."/>
            <person name="Patron N.J."/>
            <person name="Cherry J.M."/>
            <person name="Stover N.A."/>
            <person name="Krieger C.J."/>
            <person name="del Toro C."/>
            <person name="Ryder H.F."/>
            <person name="Williamson S.C."/>
            <person name="Barbeau R.A."/>
            <person name="Hamilton E.P."/>
            <person name="Orias E."/>
        </authorList>
    </citation>
    <scope>NUCLEOTIDE SEQUENCE [LARGE SCALE GENOMIC DNA]</scope>
    <source>
        <strain>SB210</strain>
    </source>
</reference>
<comment type="function">
    <text evidence="2">Methyltransferase that adds a 2'-O-methyl group at the 3'-end of piRNAs, a class of 24 to 30 nucleotide RNAs that are generated by a Dicer-independent mechanism and are primarily derived from transposons and other repeated sequence elements. This probably protects the 3'-end of piRNAs from uridylation activity and subsequent degradation. Required for programmed DNA elimination.</text>
</comment>
<comment type="catalytic activity">
    <reaction evidence="2">
        <text>small RNA 3'-end nucleotide + S-adenosyl-L-methionine = small RNA 3'-end 2'-O-methylnucleotide + S-adenosyl-L-homocysteine + H(+)</text>
        <dbReference type="Rhea" id="RHEA:37887"/>
        <dbReference type="Rhea" id="RHEA-COMP:10415"/>
        <dbReference type="Rhea" id="RHEA-COMP:10416"/>
        <dbReference type="ChEBI" id="CHEBI:15378"/>
        <dbReference type="ChEBI" id="CHEBI:57856"/>
        <dbReference type="ChEBI" id="CHEBI:59789"/>
        <dbReference type="ChEBI" id="CHEBI:74896"/>
        <dbReference type="ChEBI" id="CHEBI:74898"/>
        <dbReference type="EC" id="2.1.1.386"/>
    </reaction>
</comment>
<comment type="cofactor">
    <cofactor evidence="1">
        <name>Mg(2+)</name>
        <dbReference type="ChEBI" id="CHEBI:18420"/>
    </cofactor>
    <text evidence="1">Binds 1 Mg(2+) ion per subunit.</text>
</comment>
<comment type="subunit">
    <text evidence="2">Interacts with TWI1.</text>
</comment>
<comment type="subcellular location">
    <subcellularLocation>
        <location evidence="2">Nucleus</location>
    </subcellularLocation>
    <text>Localizes to the macronucleus.</text>
</comment>
<comment type="disruption phenotype">
    <text evidence="2">Defects in programmed DNA elimination, and inefficient production of sexual progeny due to reduction in the level and length of piRNAs.</text>
</comment>
<comment type="similarity">
    <text evidence="3">Belongs to the methyltransferase superfamily. HEN1 family.</text>
</comment>
<proteinExistence type="evidence at protein level"/>